<reference key="1">
    <citation type="submission" date="2003-11" db="EMBL/GenBank/DDBJ databases">
        <title>Sequence variation in C6 locus.</title>
        <authorList>
            <person name="Soejima M."/>
            <person name="Koda Y."/>
        </authorList>
    </citation>
    <scope>NUCLEOTIDE SEQUENCE [GENOMIC DNA / MRNA]</scope>
</reference>
<organism>
    <name type="scientific">Pan troglodytes</name>
    <name type="common">Chimpanzee</name>
    <dbReference type="NCBI Taxonomy" id="9598"/>
    <lineage>
        <taxon>Eukaryota</taxon>
        <taxon>Metazoa</taxon>
        <taxon>Chordata</taxon>
        <taxon>Craniata</taxon>
        <taxon>Vertebrata</taxon>
        <taxon>Euteleostomi</taxon>
        <taxon>Mammalia</taxon>
        <taxon>Eutheria</taxon>
        <taxon>Euarchontoglires</taxon>
        <taxon>Primates</taxon>
        <taxon>Haplorrhini</taxon>
        <taxon>Catarrhini</taxon>
        <taxon>Hominidae</taxon>
        <taxon>Pan</taxon>
    </lineage>
</organism>
<accession>P61134</accession>
<proteinExistence type="evidence at transcript level"/>
<name>CO6_PANTR</name>
<comment type="function">
    <text evidence="1">Component of the membrane attack complex (MAC), a multiprotein complex activated by the complement cascade, which inserts into a target cell membrane and forms a pore, leading to target cell membrane rupture and cell lysis. The MAC is initiated by proteolytic cleavage of C5 into complement C5b in response to the classical, alternative, lectin and GZMK complement pathways. The complement pathways consist in a cascade of proteins that leads to phagocytosis and breakdown of pathogens and signaling that strengthens the adaptive immune system. Together with component C5b, involved in MAC complex assembly: complement C5b and C6 associate with the outer leaflet of target cell membrane, reducing the energy for membrane bending.</text>
</comment>
<comment type="activity regulation">
    <text evidence="1">Membrane attack complex (MAC) assembly is inhibited by CD59, thereby protecting self-cells from damage during complement activation. MAC assembly is also inhibited by clusterin (CLU) chaperones that inhibit polymerization of C9.</text>
</comment>
<comment type="subunit">
    <text evidence="1">Component of the membrane attack complex (MAC), composed of complement C5b, C6, C7, C8A, C8B, C8G and multiple copies of the pore-forming subunit C9.</text>
</comment>
<comment type="subcellular location">
    <subcellularLocation>
        <location evidence="1">Secreted</location>
    </subcellularLocation>
    <subcellularLocation>
        <location evidence="1">Target cell membrane</location>
        <topology evidence="1">Multi-pass membrane protein</topology>
    </subcellularLocation>
    <text evidence="1">Secreted as soluble protein. Inserts into the cell membrane of target cells.</text>
</comment>
<comment type="PTM">
    <text evidence="1">All cysteine residues are assumed to be cross-linked to one another. Individual modules containing an even number of conserved cysteine residues are supposed to have disulfide linkages only within the same module.</text>
</comment>
<comment type="similarity">
    <text evidence="8">Belongs to the complement C6/C7/C8/C9 family.</text>
</comment>
<keyword id="KW-0106">Calcium</keyword>
<keyword id="KW-0180">Complement pathway</keyword>
<keyword id="KW-0204">Cytolysis</keyword>
<keyword id="KW-1015">Disulfide bond</keyword>
<keyword id="KW-0245">EGF-like domain</keyword>
<keyword id="KW-0325">Glycoprotein</keyword>
<keyword id="KW-0391">Immunity</keyword>
<keyword id="KW-0399">Innate immunity</keyword>
<keyword id="KW-0472">Membrane</keyword>
<keyword id="KW-0473">Membrane attack complex</keyword>
<keyword id="KW-0479">Metal-binding</keyword>
<keyword id="KW-1185">Reference proteome</keyword>
<keyword id="KW-0677">Repeat</keyword>
<keyword id="KW-0964">Secreted</keyword>
<keyword id="KW-0732">Signal</keyword>
<keyword id="KW-0768">Sushi</keyword>
<keyword id="KW-1052">Target cell membrane</keyword>
<keyword id="KW-1053">Target membrane</keyword>
<keyword id="KW-0812">Transmembrane</keyword>
<keyword id="KW-1134">Transmembrane beta strand</keyword>
<evidence type="ECO:0000250" key="1">
    <source>
        <dbReference type="UniProtKB" id="P13671"/>
    </source>
</evidence>
<evidence type="ECO:0000255" key="2"/>
<evidence type="ECO:0000255" key="3">
    <source>
        <dbReference type="PROSITE-ProRule" id="PRU00124"/>
    </source>
</evidence>
<evidence type="ECO:0000255" key="4">
    <source>
        <dbReference type="PROSITE-ProRule" id="PRU00210"/>
    </source>
</evidence>
<evidence type="ECO:0000255" key="5">
    <source>
        <dbReference type="PROSITE-ProRule" id="PRU00302"/>
    </source>
</evidence>
<evidence type="ECO:0000255" key="6">
    <source>
        <dbReference type="PROSITE-ProRule" id="PRU00745"/>
    </source>
</evidence>
<evidence type="ECO:0000255" key="7">
    <source>
        <dbReference type="PROSITE-ProRule" id="PRU00798"/>
    </source>
</evidence>
<evidence type="ECO:0000305" key="8"/>
<protein>
    <recommendedName>
        <fullName>Complement component C6</fullName>
    </recommendedName>
</protein>
<feature type="signal peptide" evidence="1">
    <location>
        <begin position="1"/>
        <end position="21"/>
    </location>
</feature>
<feature type="chain" id="PRO_0000023580" description="Complement component C6">
    <location>
        <begin position="22"/>
        <end position="934"/>
    </location>
</feature>
<feature type="transmembrane region" description="Beta stranded" evidence="1">
    <location>
        <begin position="278"/>
        <end position="290"/>
    </location>
</feature>
<feature type="transmembrane region" description="Beta stranded" evidence="1">
    <location>
        <begin position="402"/>
        <end position="415"/>
    </location>
</feature>
<feature type="domain" description="TSP type-1 1" evidence="4">
    <location>
        <begin position="22"/>
        <end position="79"/>
    </location>
</feature>
<feature type="domain" description="TSP type-1 2" evidence="4">
    <location>
        <begin position="81"/>
        <end position="134"/>
    </location>
</feature>
<feature type="domain" description="LDL-receptor class A" evidence="3">
    <location>
        <begin position="138"/>
        <end position="175"/>
    </location>
</feature>
<feature type="domain" description="MACPF" evidence="6">
    <location>
        <begin position="176"/>
        <end position="522"/>
    </location>
</feature>
<feature type="domain" description="EGF-like">
    <location>
        <begin position="523"/>
        <end position="553"/>
    </location>
</feature>
<feature type="domain" description="TSP type-1 3" evidence="4">
    <location>
        <begin position="565"/>
        <end position="612"/>
    </location>
</feature>
<feature type="domain" description="Sushi 1" evidence="5">
    <location>
        <begin position="642"/>
        <end position="701"/>
    </location>
</feature>
<feature type="domain" description="Sushi 2" evidence="5">
    <location>
        <begin position="702"/>
        <end position="763"/>
    </location>
</feature>
<feature type="domain" description="Kazal-like 1" evidence="7">
    <location>
        <begin position="780"/>
        <end position="839"/>
    </location>
</feature>
<feature type="domain" description="Kazal-like 2" evidence="7">
    <location>
        <begin position="876"/>
        <end position="934"/>
    </location>
</feature>
<feature type="region of interest" description="CCP 1">
    <location>
        <begin position="611"/>
        <end position="688"/>
    </location>
</feature>
<feature type="region of interest" description="C5b-binding domain">
    <location>
        <begin position="642"/>
        <end position="934"/>
    </location>
</feature>
<feature type="region of interest" description="CCP 2">
    <location>
        <begin position="689"/>
        <end position="765"/>
    </location>
</feature>
<feature type="region of interest" description="Factor I module (FIM) 1">
    <location>
        <begin position="766"/>
        <end position="840"/>
    </location>
</feature>
<feature type="region of interest" description="Factor I module (FIM) 2">
    <location>
        <begin position="858"/>
        <end position="934"/>
    </location>
</feature>
<feature type="binding site" evidence="1">
    <location>
        <position position="156"/>
    </location>
    <ligand>
        <name>Ca(2+)</name>
        <dbReference type="ChEBI" id="CHEBI:29108"/>
    </ligand>
</feature>
<feature type="binding site" evidence="1">
    <location>
        <position position="159"/>
    </location>
    <ligand>
        <name>Ca(2+)</name>
        <dbReference type="ChEBI" id="CHEBI:29108"/>
    </ligand>
</feature>
<feature type="binding site" evidence="1">
    <location>
        <position position="161"/>
    </location>
    <ligand>
        <name>Ca(2+)</name>
        <dbReference type="ChEBI" id="CHEBI:29108"/>
    </ligand>
</feature>
<feature type="binding site" evidence="1">
    <location>
        <position position="163"/>
    </location>
    <ligand>
        <name>Ca(2+)</name>
        <dbReference type="ChEBI" id="CHEBI:29108"/>
    </ligand>
</feature>
<feature type="binding site" evidence="1">
    <location>
        <position position="169"/>
    </location>
    <ligand>
        <name>Ca(2+)</name>
        <dbReference type="ChEBI" id="CHEBI:29108"/>
    </ligand>
</feature>
<feature type="binding site" evidence="1">
    <location>
        <position position="170"/>
    </location>
    <ligand>
        <name>Ca(2+)</name>
        <dbReference type="ChEBI" id="CHEBI:29108"/>
    </ligand>
</feature>
<feature type="glycosylation site" description="C-linked (Man) tryptophan" evidence="1">
    <location>
        <position position="29"/>
    </location>
</feature>
<feature type="glycosylation site" description="C-linked (Man) tryptophan" evidence="1">
    <location>
        <position position="32"/>
    </location>
</feature>
<feature type="glycosylation site" description="O-linked (Fuc...) threonine" evidence="1">
    <location>
        <position position="38"/>
    </location>
</feature>
<feature type="glycosylation site" description="C-linked (Man) tryptophan" evidence="1">
    <location>
        <position position="90"/>
    </location>
</feature>
<feature type="glycosylation site" description="N-linked (GlcNAc...) asparagine" evidence="2">
    <location>
        <position position="324"/>
    </location>
</feature>
<feature type="glycosylation site" description="O-linked (Fuc...) threonine" evidence="1">
    <location>
        <position position="392"/>
    </location>
</feature>
<feature type="glycosylation site" description="C-linked (Man) tryptophan" evidence="1">
    <location>
        <position position="568"/>
    </location>
</feature>
<feature type="glycosylation site" description="C-linked (Man) tryptophan" evidence="1">
    <location>
        <position position="571"/>
    </location>
</feature>
<feature type="glycosylation site" description="C-linked (Man) tryptophan" evidence="1">
    <location>
        <position position="574"/>
    </location>
</feature>
<feature type="glycosylation site" description="N-linked (GlcNAc...) asparagine" evidence="2">
    <location>
        <position position="855"/>
    </location>
</feature>
<feature type="disulfide bond" evidence="1">
    <location>
        <begin position="22"/>
        <end position="61"/>
    </location>
</feature>
<feature type="disulfide bond" evidence="1">
    <location>
        <begin position="24"/>
        <end position="65"/>
    </location>
</feature>
<feature type="disulfide bond" evidence="1">
    <location>
        <begin position="35"/>
        <end position="73"/>
    </location>
</feature>
<feature type="disulfide bond" evidence="1">
    <location>
        <begin position="39"/>
        <end position="78"/>
    </location>
</feature>
<feature type="disulfide bond" evidence="1">
    <location>
        <begin position="82"/>
        <end position="117"/>
    </location>
</feature>
<feature type="disulfide bond" evidence="1">
    <location>
        <begin position="93"/>
        <end position="127"/>
    </location>
</feature>
<feature type="disulfide bond" evidence="1">
    <location>
        <begin position="96"/>
        <end position="133"/>
    </location>
</feature>
<feature type="disulfide bond" evidence="1">
    <location>
        <begin position="140"/>
        <end position="151"/>
    </location>
</feature>
<feature type="disulfide bond" evidence="1">
    <location>
        <begin position="146"/>
        <end position="164"/>
    </location>
</feature>
<feature type="disulfide bond" evidence="1">
    <location>
        <begin position="158"/>
        <end position="173"/>
    </location>
</feature>
<feature type="disulfide bond" evidence="1">
    <location>
        <begin position="180"/>
        <end position="218"/>
    </location>
</feature>
<feature type="disulfide bond" evidence="1">
    <location>
        <begin position="399"/>
        <end position="420"/>
    </location>
</feature>
<feature type="disulfide bond" evidence="1">
    <location>
        <begin position="499"/>
        <end position="623"/>
    </location>
</feature>
<feature type="disulfide bond" evidence="1">
    <location>
        <begin position="521"/>
        <end position="570"/>
    </location>
</feature>
<feature type="disulfide bond" evidence="1">
    <location>
        <begin position="523"/>
        <end position="539"/>
    </location>
</feature>
<feature type="disulfide bond" evidence="1">
    <location>
        <begin position="526"/>
        <end position="541"/>
    </location>
</feature>
<feature type="disulfide bond" evidence="1">
    <location>
        <begin position="543"/>
        <end position="552"/>
    </location>
</feature>
<feature type="disulfide bond" evidence="1">
    <location>
        <begin position="577"/>
        <end position="611"/>
    </location>
</feature>
<feature type="disulfide bond" evidence="1">
    <location>
        <begin position="589"/>
        <end position="601"/>
    </location>
</feature>
<feature type="disulfide bond" evidence="1">
    <location>
        <begin position="644"/>
        <end position="686"/>
    </location>
</feature>
<feature type="disulfide bond" evidence="1">
    <location>
        <begin position="672"/>
        <end position="699"/>
    </location>
</feature>
<feature type="disulfide bond" evidence="1">
    <location>
        <begin position="704"/>
        <end position="746"/>
    </location>
</feature>
<feature type="disulfide bond" evidence="1">
    <location>
        <begin position="732"/>
        <end position="761"/>
    </location>
</feature>
<feature type="disulfide bond" evidence="1">
    <location>
        <begin position="773"/>
        <end position="823"/>
    </location>
</feature>
<feature type="disulfide bond" evidence="1">
    <location>
        <begin position="784"/>
        <end position="801"/>
    </location>
</feature>
<feature type="disulfide bond" evidence="1">
    <location>
        <begin position="786"/>
        <end position="837"/>
    </location>
</feature>
<feature type="disulfide bond" evidence="1">
    <location>
        <begin position="793"/>
        <end position="816"/>
    </location>
</feature>
<feature type="disulfide bond" evidence="1">
    <location>
        <begin position="862"/>
        <end position="873"/>
    </location>
</feature>
<feature type="disulfide bond" evidence="1">
    <location>
        <begin position="867"/>
        <end position="919"/>
    </location>
</feature>
<feature type="disulfide bond" evidence="1">
    <location>
        <begin position="880"/>
        <end position="897"/>
    </location>
</feature>
<feature type="disulfide bond" evidence="1">
    <location>
        <begin position="882"/>
        <end position="932"/>
    </location>
</feature>
<feature type="disulfide bond" evidence="1">
    <location>
        <begin position="888"/>
        <end position="912"/>
    </location>
</feature>
<dbReference type="EMBL" id="AB126593">
    <property type="protein sequence ID" value="BAD02322.1"/>
    <property type="molecule type" value="mRNA"/>
</dbReference>
<dbReference type="EMBL" id="AB126595">
    <property type="protein sequence ID" value="BAD02324.1"/>
    <property type="molecule type" value="Genomic_DNA"/>
</dbReference>
<dbReference type="RefSeq" id="NP_001009015.1">
    <property type="nucleotide sequence ID" value="NM_001009015.1"/>
</dbReference>
<dbReference type="SMR" id="P61134"/>
<dbReference type="FunCoup" id="P61134">
    <property type="interactions" value="104"/>
</dbReference>
<dbReference type="STRING" id="9598.ENSPTRP00000028843"/>
<dbReference type="GlyCosmos" id="P61134">
    <property type="glycosylation" value="10 sites, No reported glycans"/>
</dbReference>
<dbReference type="PaxDb" id="9598-ENSPTRP00000028843"/>
<dbReference type="GeneID" id="449612"/>
<dbReference type="CTD" id="729"/>
<dbReference type="eggNOG" id="ENOG502QPIM">
    <property type="taxonomic scope" value="Eukaryota"/>
</dbReference>
<dbReference type="InParanoid" id="P61134"/>
<dbReference type="Proteomes" id="UP000002277">
    <property type="component" value="Unplaced"/>
</dbReference>
<dbReference type="GO" id="GO:0005615">
    <property type="term" value="C:extracellular space"/>
    <property type="evidence" value="ECO:0000318"/>
    <property type="project" value="GO_Central"/>
</dbReference>
<dbReference type="GO" id="GO:0005579">
    <property type="term" value="C:membrane attack complex"/>
    <property type="evidence" value="ECO:0000318"/>
    <property type="project" value="GO_Central"/>
</dbReference>
<dbReference type="GO" id="GO:0006956">
    <property type="term" value="P:complement activation"/>
    <property type="evidence" value="ECO:0000318"/>
    <property type="project" value="GO_Central"/>
</dbReference>
<dbReference type="GO" id="GO:0006958">
    <property type="term" value="P:complement activation, classical pathway"/>
    <property type="evidence" value="ECO:0007669"/>
    <property type="project" value="UniProtKB-KW"/>
</dbReference>
<dbReference type="GO" id="GO:0045087">
    <property type="term" value="P:innate immune response"/>
    <property type="evidence" value="ECO:0007669"/>
    <property type="project" value="UniProtKB-KW"/>
</dbReference>
<dbReference type="GO" id="GO:0031640">
    <property type="term" value="P:killing of cells of another organism"/>
    <property type="evidence" value="ECO:0007669"/>
    <property type="project" value="UniProtKB-KW"/>
</dbReference>
<dbReference type="CDD" id="cd00033">
    <property type="entry name" value="CCP"/>
    <property type="match status" value="2"/>
</dbReference>
<dbReference type="CDD" id="cd00112">
    <property type="entry name" value="LDLa"/>
    <property type="match status" value="1"/>
</dbReference>
<dbReference type="FunFam" id="2.10.70.10:FF:000082">
    <property type="entry name" value="Complement component C6"/>
    <property type="match status" value="1"/>
</dbReference>
<dbReference type="FunFam" id="2.10.70.10:FF:000093">
    <property type="entry name" value="Complement component C6"/>
    <property type="match status" value="1"/>
</dbReference>
<dbReference type="FunFam" id="2.20.100.10:FF:000087">
    <property type="entry name" value="Complement component C6"/>
    <property type="match status" value="1"/>
</dbReference>
<dbReference type="FunFam" id="3.30.60.30:FF:000046">
    <property type="entry name" value="Complement component C6"/>
    <property type="match status" value="1"/>
</dbReference>
<dbReference type="FunFam" id="3.30.60.30:FF:000047">
    <property type="entry name" value="Complement component C6"/>
    <property type="match status" value="1"/>
</dbReference>
<dbReference type="FunFam" id="4.10.400.10:FF:000065">
    <property type="entry name" value="Transmembrane protease serine 7"/>
    <property type="match status" value="1"/>
</dbReference>
<dbReference type="FunFam" id="2.20.100.10:FF:000002">
    <property type="entry name" value="Unc-5 netrin receptor C"/>
    <property type="match status" value="1"/>
</dbReference>
<dbReference type="Gene3D" id="3.30.60.30">
    <property type="match status" value="2"/>
</dbReference>
<dbReference type="Gene3D" id="2.10.70.10">
    <property type="entry name" value="Complement Module, domain 1"/>
    <property type="match status" value="2"/>
</dbReference>
<dbReference type="Gene3D" id="4.10.400.10">
    <property type="entry name" value="Low-density Lipoprotein Receptor"/>
    <property type="match status" value="1"/>
</dbReference>
<dbReference type="Gene3D" id="2.20.100.10">
    <property type="entry name" value="Thrombospondin type-1 (TSP1) repeat"/>
    <property type="match status" value="3"/>
</dbReference>
<dbReference type="InterPro" id="IPR048828">
    <property type="entry name" value="C6_KAZAL"/>
</dbReference>
<dbReference type="InterPro" id="IPR048831">
    <property type="entry name" value="C8A_B_C6_EGF-like"/>
</dbReference>
<dbReference type="InterPro" id="IPR003884">
    <property type="entry name" value="FacI_MAC"/>
</dbReference>
<dbReference type="InterPro" id="IPR002350">
    <property type="entry name" value="Kazal_dom"/>
</dbReference>
<dbReference type="InterPro" id="IPR036055">
    <property type="entry name" value="LDL_receptor-like_sf"/>
</dbReference>
<dbReference type="InterPro" id="IPR023415">
    <property type="entry name" value="LDLR_class-A_CS"/>
</dbReference>
<dbReference type="InterPro" id="IPR002172">
    <property type="entry name" value="LDrepeatLR_classA_rpt"/>
</dbReference>
<dbReference type="InterPro" id="IPR001862">
    <property type="entry name" value="MAC_perforin"/>
</dbReference>
<dbReference type="InterPro" id="IPR020864">
    <property type="entry name" value="MACPF"/>
</dbReference>
<dbReference type="InterPro" id="IPR020863">
    <property type="entry name" value="MACPF_CS"/>
</dbReference>
<dbReference type="InterPro" id="IPR035976">
    <property type="entry name" value="Sushi/SCR/CCP_sf"/>
</dbReference>
<dbReference type="InterPro" id="IPR000436">
    <property type="entry name" value="Sushi_SCR_CCP_dom"/>
</dbReference>
<dbReference type="InterPro" id="IPR000884">
    <property type="entry name" value="TSP1_rpt"/>
</dbReference>
<dbReference type="InterPro" id="IPR036383">
    <property type="entry name" value="TSP1_rpt_sf"/>
</dbReference>
<dbReference type="PANTHER" id="PTHR45742">
    <property type="entry name" value="COMPLEMENT COMPONENT C6"/>
    <property type="match status" value="1"/>
</dbReference>
<dbReference type="PANTHER" id="PTHR45742:SF4">
    <property type="entry name" value="COMPLEMENT COMPONENT C6"/>
    <property type="match status" value="1"/>
</dbReference>
<dbReference type="Pfam" id="PF21195">
    <property type="entry name" value="EGF_C8A_B_C6"/>
    <property type="match status" value="1"/>
</dbReference>
<dbReference type="Pfam" id="PF21288">
    <property type="entry name" value="Kazal_C6"/>
    <property type="match status" value="1"/>
</dbReference>
<dbReference type="Pfam" id="PF00057">
    <property type="entry name" value="Ldl_recept_a"/>
    <property type="match status" value="1"/>
</dbReference>
<dbReference type="Pfam" id="PF01823">
    <property type="entry name" value="MACPF"/>
    <property type="match status" value="1"/>
</dbReference>
<dbReference type="Pfam" id="PF00084">
    <property type="entry name" value="Sushi"/>
    <property type="match status" value="2"/>
</dbReference>
<dbReference type="Pfam" id="PF00090">
    <property type="entry name" value="TSP_1"/>
    <property type="match status" value="3"/>
</dbReference>
<dbReference type="PRINTS" id="PR00764">
    <property type="entry name" value="COMPLEMENTC9"/>
</dbReference>
<dbReference type="SMART" id="SM00032">
    <property type="entry name" value="CCP"/>
    <property type="match status" value="2"/>
</dbReference>
<dbReference type="SMART" id="SM00057">
    <property type="entry name" value="FIMAC"/>
    <property type="match status" value="2"/>
</dbReference>
<dbReference type="SMART" id="SM00192">
    <property type="entry name" value="LDLa"/>
    <property type="match status" value="1"/>
</dbReference>
<dbReference type="SMART" id="SM00457">
    <property type="entry name" value="MACPF"/>
    <property type="match status" value="1"/>
</dbReference>
<dbReference type="SMART" id="SM00209">
    <property type="entry name" value="TSP1"/>
    <property type="match status" value="3"/>
</dbReference>
<dbReference type="SUPFAM" id="SSF57535">
    <property type="entry name" value="Complement control module/SCR domain"/>
    <property type="match status" value="2"/>
</dbReference>
<dbReference type="SUPFAM" id="SSF57424">
    <property type="entry name" value="LDL receptor-like module"/>
    <property type="match status" value="1"/>
</dbReference>
<dbReference type="SUPFAM" id="SSF82895">
    <property type="entry name" value="TSP-1 type 1 repeat"/>
    <property type="match status" value="3"/>
</dbReference>
<dbReference type="PROSITE" id="PS00022">
    <property type="entry name" value="EGF_1"/>
    <property type="match status" value="1"/>
</dbReference>
<dbReference type="PROSITE" id="PS51465">
    <property type="entry name" value="KAZAL_2"/>
    <property type="match status" value="2"/>
</dbReference>
<dbReference type="PROSITE" id="PS01209">
    <property type="entry name" value="LDLRA_1"/>
    <property type="match status" value="1"/>
</dbReference>
<dbReference type="PROSITE" id="PS50068">
    <property type="entry name" value="LDLRA_2"/>
    <property type="match status" value="1"/>
</dbReference>
<dbReference type="PROSITE" id="PS00279">
    <property type="entry name" value="MACPF_1"/>
    <property type="match status" value="1"/>
</dbReference>
<dbReference type="PROSITE" id="PS51412">
    <property type="entry name" value="MACPF_2"/>
    <property type="match status" value="1"/>
</dbReference>
<dbReference type="PROSITE" id="PS50923">
    <property type="entry name" value="SUSHI"/>
    <property type="match status" value="2"/>
</dbReference>
<dbReference type="PROSITE" id="PS50092">
    <property type="entry name" value="TSP1"/>
    <property type="match status" value="3"/>
</dbReference>
<gene>
    <name type="primary">C6</name>
</gene>
<sequence length="934" mass="104947">MARRSVLYFILLNALINKGQACFCDHYAWTQWTSCSKTCNSGTQSRHRQIVVDKYYQENFCEQICSKQETRECNWQRCPINCLLGDFGPWSDCDPCVEKQSKVRSVLRPSQFGGQPCTEPLVAFQPCIPSKLCKIEEADCKNKFRCDSGRCIARKLECNGENDCGDNSDERDCGRTKAVCTRKYNPIPSVQLMGNGFHFLAGEPRGEVLDNSFTGGICKTVKSSRTSNPYRVPANLENVGFEVQTAEDDLKTDFYKDLTSLGHNENQQGSFSSQGGSSFSVPIFYSSKRSENINHNSAFKQAIQASHKKDSSFIRIHKVMKVLNFTTKAKDLHLSDVFLKALNHLPLEYNSALYSRIFDDFGTHYFTSGSLGGVYDLLYQFSSEELKNSGLTEEEAKHCVRIETKKRVLFVKKTKVEHRCTTNKLSEKHEGSFIQGAEKSISLIRGGRSEYAAALAWEKGSSGLEEKTFSEWLESVKENPAVIDFELAPIVDLVRNIPCAVTKRNNLRKALQEYAAKFDPCQCAPCPNNGRPTLSGTECLCVCQSGTYGENCEKQSPDYKSNAVDGHWGCWSSWSTCDATYKRSRTRECNNPVPQRGGKRCEGEKRQEEDCTFSIMENNGQPCINDDEEMKEVDLPEIEADSGCPQPVPPENGFIRNEKQLYSVGEDVEISCLTGFETVGYQYFRCLPDGTWRQGDVECQRRECIKPVVQEVLTITPFQRLYRIGESIELTCPKGFVVAGPSRYTCQGNSWTPPISNSLTCEKDTLTKLRGHCQLGQKQSGSECICMSPEEDCSHHSEDLCVFDTDSNDYFTSPACKFLAEKCLNNQQLHFLHIGSCQDGHQLEWGLERTRLSSNSTKKESCGYDTCYDWEKCSASTSKCVCLLPPQCFKGGNQLYCVKMGSSTSEKTLNICEVGTIRCANRKMEILHPGKCLA</sequence>